<keyword id="KW-0002">3D-structure</keyword>
<keyword id="KW-0963">Cytoplasm</keyword>
<keyword id="KW-1017">Isopeptide bond</keyword>
<keyword id="KW-0539">Nucleus</keyword>
<keyword id="KW-0597">Phosphoprotein</keyword>
<keyword id="KW-1185">Reference proteome</keyword>
<keyword id="KW-0687">Ribonucleoprotein</keyword>
<keyword id="KW-0689">Ribosomal protein</keyword>
<keyword id="KW-0832">Ubl conjugation</keyword>
<protein>
    <recommendedName>
        <fullName evidence="4">Large ribosomal subunit protein uL10</fullName>
    </recommendedName>
    <alternativeName>
        <fullName>60S acidic ribosomal protein P0</fullName>
    </alternativeName>
    <alternativeName>
        <fullName>60S ribosomal protein L10E</fullName>
    </alternativeName>
</protein>
<accession>Q29214</accession>
<accession>A5X2G5</accession>
<dbReference type="EMBL" id="DQ316319">
    <property type="protein sequence ID" value="ABC47963.1"/>
    <property type="molecule type" value="mRNA"/>
</dbReference>
<dbReference type="EMBL" id="F14800">
    <property type="protein sequence ID" value="CAA23264.1"/>
    <property type="molecule type" value="mRNA"/>
</dbReference>
<dbReference type="RefSeq" id="NP_001092068.1">
    <property type="nucleotide sequence ID" value="NM_001098598.1"/>
</dbReference>
<dbReference type="PDB" id="3J7P">
    <property type="method" value="EM"/>
    <property type="resolution" value="3.50 A"/>
    <property type="chains" value="q=5-206"/>
</dbReference>
<dbReference type="PDB" id="6MTD">
    <property type="method" value="EM"/>
    <property type="resolution" value="3.30 A"/>
    <property type="chains" value="s=5-200"/>
</dbReference>
<dbReference type="PDB" id="6MTE">
    <property type="method" value="EM"/>
    <property type="resolution" value="3.40 A"/>
    <property type="chains" value="s=5-200"/>
</dbReference>
<dbReference type="PDBsum" id="3J7P"/>
<dbReference type="PDBsum" id="6MTD"/>
<dbReference type="PDBsum" id="6MTE"/>
<dbReference type="EMDB" id="EMD-9240"/>
<dbReference type="EMDB" id="EMD-9242"/>
<dbReference type="SMR" id="Q29214"/>
<dbReference type="FunCoup" id="Q29214">
    <property type="interactions" value="1921"/>
</dbReference>
<dbReference type="STRING" id="9823.ENSSSCP00000039777"/>
<dbReference type="PeptideAtlas" id="Q29214"/>
<dbReference type="Ensembl" id="ENSSSCT00000043457.3">
    <property type="protein sequence ID" value="ENSSSCP00000044506.3"/>
    <property type="gene ID" value="ENSSSCG00000036014.3"/>
</dbReference>
<dbReference type="Ensembl" id="ENSSSCT00025065433.1">
    <property type="protein sequence ID" value="ENSSSCP00025027911.1"/>
    <property type="gene ID" value="ENSSSCG00025048049.1"/>
</dbReference>
<dbReference type="Ensembl" id="ENSSSCT00030026295.1">
    <property type="protein sequence ID" value="ENSSSCP00030011744.1"/>
    <property type="gene ID" value="ENSSSCG00030019041.1"/>
</dbReference>
<dbReference type="Ensembl" id="ENSSSCT00035049606.1">
    <property type="protein sequence ID" value="ENSSSCP00035019844.1"/>
    <property type="gene ID" value="ENSSSCG00035037418.1"/>
</dbReference>
<dbReference type="Ensembl" id="ENSSSCT00035049620.1">
    <property type="protein sequence ID" value="ENSSSCP00035019848.1"/>
    <property type="gene ID" value="ENSSSCG00035037418.1"/>
</dbReference>
<dbReference type="Ensembl" id="ENSSSCT00045006865.1">
    <property type="protein sequence ID" value="ENSSSCP00045004695.1"/>
    <property type="gene ID" value="ENSSSCG00045004115.1"/>
</dbReference>
<dbReference type="Ensembl" id="ENSSSCT00050019212.1">
    <property type="protein sequence ID" value="ENSSSCP00050007979.1"/>
    <property type="gene ID" value="ENSSSCG00050014204.1"/>
</dbReference>
<dbReference type="Ensembl" id="ENSSSCT00055026729.1">
    <property type="protein sequence ID" value="ENSSSCP00055021251.1"/>
    <property type="gene ID" value="ENSSSCG00055013468.1"/>
</dbReference>
<dbReference type="Ensembl" id="ENSSSCT00060072858.1">
    <property type="protein sequence ID" value="ENSSSCP00060031420.1"/>
    <property type="gene ID" value="ENSSSCG00060053490.1"/>
</dbReference>
<dbReference type="Ensembl" id="ENSSSCT00065040083.1">
    <property type="protein sequence ID" value="ENSSSCP00065016936.1"/>
    <property type="gene ID" value="ENSSSCG00065029708.1"/>
</dbReference>
<dbReference type="Ensembl" id="ENSSSCT00070013836.1">
    <property type="protein sequence ID" value="ENSSSCP00070011404.1"/>
    <property type="gene ID" value="ENSSSCG00070007168.1"/>
</dbReference>
<dbReference type="Ensembl" id="ENSSSCT00070013856.1">
    <property type="protein sequence ID" value="ENSSSCP00070011422.1"/>
    <property type="gene ID" value="ENSSSCG00070007168.1"/>
</dbReference>
<dbReference type="Ensembl" id="ENSSSCT00085042837">
    <property type="protein sequence ID" value="ENSSSCP00085030120"/>
    <property type="gene ID" value="ENSSSCG00085022295"/>
</dbReference>
<dbReference type="Ensembl" id="ENSSSCT00090029155">
    <property type="protein sequence ID" value="ENSSSCP00090018073"/>
    <property type="gene ID" value="ENSSSCG00090016520"/>
</dbReference>
<dbReference type="Ensembl" id="ENSSSCT00105049677">
    <property type="protein sequence ID" value="ENSSSCP00105034983"/>
    <property type="gene ID" value="ENSSSCG00105026124"/>
</dbReference>
<dbReference type="Ensembl" id="ENSSSCT00110076306">
    <property type="protein sequence ID" value="ENSSSCP00110053904"/>
    <property type="gene ID" value="ENSSSCG00110039935"/>
</dbReference>
<dbReference type="Ensembl" id="ENSSSCT00115006067">
    <property type="protein sequence ID" value="ENSSSCP00115005659"/>
    <property type="gene ID" value="ENSSSCG00115003570"/>
</dbReference>
<dbReference type="Ensembl" id="ENSSSCT00130059848">
    <property type="protein sequence ID" value="ENSSSCP00130042890"/>
    <property type="gene ID" value="ENSSSCG00130030674"/>
</dbReference>
<dbReference type="GeneID" id="100049695"/>
<dbReference type="KEGG" id="ssc:100049695"/>
<dbReference type="CTD" id="6175"/>
<dbReference type="VGNC" id="VGNC:111137">
    <property type="gene designation" value="RPLP0"/>
</dbReference>
<dbReference type="GeneTree" id="ENSGT00390000017839"/>
<dbReference type="InParanoid" id="Q29214"/>
<dbReference type="OMA" id="DMNPFKL"/>
<dbReference type="OrthoDB" id="10259902at2759"/>
<dbReference type="Reactome" id="R-SSC-156827">
    <property type="pathway name" value="L13a-mediated translational silencing of Ceruloplasmin expression"/>
</dbReference>
<dbReference type="Reactome" id="R-SSC-1799339">
    <property type="pathway name" value="SRP-dependent cotranslational protein targeting to membrane"/>
</dbReference>
<dbReference type="Reactome" id="R-SSC-6791226">
    <property type="pathway name" value="Major pathway of rRNA processing in the nucleolus and cytosol"/>
</dbReference>
<dbReference type="Reactome" id="R-SSC-72689">
    <property type="pathway name" value="Formation of a pool of free 40S subunits"/>
</dbReference>
<dbReference type="Reactome" id="R-SSC-72706">
    <property type="pathway name" value="GTP hydrolysis and joining of the 60S ribosomal subunit"/>
</dbReference>
<dbReference type="Reactome" id="R-SSC-975956">
    <property type="pathway name" value="Nonsense Mediated Decay (NMD) independent of the Exon Junction Complex (EJC)"/>
</dbReference>
<dbReference type="Reactome" id="R-SSC-975957">
    <property type="pathway name" value="Nonsense Mediated Decay (NMD) enhanced by the Exon Junction Complex (EJC)"/>
</dbReference>
<dbReference type="Proteomes" id="UP000008227">
    <property type="component" value="Chromosome 14"/>
</dbReference>
<dbReference type="Proteomes" id="UP000314985">
    <property type="component" value="Chromosome 14"/>
</dbReference>
<dbReference type="Proteomes" id="UP000694570">
    <property type="component" value="Unplaced"/>
</dbReference>
<dbReference type="Proteomes" id="UP000694571">
    <property type="component" value="Unplaced"/>
</dbReference>
<dbReference type="Proteomes" id="UP000694720">
    <property type="component" value="Unplaced"/>
</dbReference>
<dbReference type="Proteomes" id="UP000694722">
    <property type="component" value="Unplaced"/>
</dbReference>
<dbReference type="Proteomes" id="UP000694723">
    <property type="component" value="Unplaced"/>
</dbReference>
<dbReference type="Proteomes" id="UP000694724">
    <property type="component" value="Unplaced"/>
</dbReference>
<dbReference type="Proteomes" id="UP000694725">
    <property type="component" value="Unplaced"/>
</dbReference>
<dbReference type="Proteomes" id="UP000694726">
    <property type="component" value="Unplaced"/>
</dbReference>
<dbReference type="Proteomes" id="UP000694727">
    <property type="component" value="Unplaced"/>
</dbReference>
<dbReference type="Proteomes" id="UP000694728">
    <property type="component" value="Unplaced"/>
</dbReference>
<dbReference type="GO" id="GO:0005737">
    <property type="term" value="C:cytoplasm"/>
    <property type="evidence" value="ECO:0000250"/>
    <property type="project" value="UniProtKB"/>
</dbReference>
<dbReference type="GO" id="GO:0036464">
    <property type="term" value="C:cytoplasmic ribonucleoprotein granule"/>
    <property type="evidence" value="ECO:0007669"/>
    <property type="project" value="Ensembl"/>
</dbReference>
<dbReference type="GO" id="GO:0022625">
    <property type="term" value="C:cytosolic large ribosomal subunit"/>
    <property type="evidence" value="ECO:0007669"/>
    <property type="project" value="Ensembl"/>
</dbReference>
<dbReference type="GO" id="GO:0005783">
    <property type="term" value="C:endoplasmic reticulum"/>
    <property type="evidence" value="ECO:0007669"/>
    <property type="project" value="Ensembl"/>
</dbReference>
<dbReference type="GO" id="GO:0005634">
    <property type="term" value="C:nucleus"/>
    <property type="evidence" value="ECO:0000250"/>
    <property type="project" value="UniProtKB"/>
</dbReference>
<dbReference type="GO" id="GO:0014069">
    <property type="term" value="C:postsynaptic density"/>
    <property type="evidence" value="ECO:0007669"/>
    <property type="project" value="Ensembl"/>
</dbReference>
<dbReference type="GO" id="GO:1990904">
    <property type="term" value="C:ribonucleoprotein complex"/>
    <property type="evidence" value="ECO:0000250"/>
    <property type="project" value="UniProtKB"/>
</dbReference>
<dbReference type="GO" id="GO:0003735">
    <property type="term" value="F:structural constituent of ribosome"/>
    <property type="evidence" value="ECO:0007669"/>
    <property type="project" value="Ensembl"/>
</dbReference>
<dbReference type="GO" id="GO:0042254">
    <property type="term" value="P:ribosome biogenesis"/>
    <property type="evidence" value="ECO:0007669"/>
    <property type="project" value="InterPro"/>
</dbReference>
<dbReference type="CDD" id="cd05795">
    <property type="entry name" value="Ribosomal_P0_L10e"/>
    <property type="match status" value="1"/>
</dbReference>
<dbReference type="FunFam" id="3.30.70.1730:FF:000002">
    <property type="entry name" value="60S acidic ribosomal protein P0"/>
    <property type="match status" value="1"/>
</dbReference>
<dbReference type="FunFam" id="3.90.105.20:FF:000001">
    <property type="entry name" value="60S acidic ribosomal protein P0"/>
    <property type="match status" value="1"/>
</dbReference>
<dbReference type="Gene3D" id="3.30.70.1730">
    <property type="match status" value="1"/>
</dbReference>
<dbReference type="Gene3D" id="3.90.105.20">
    <property type="match status" value="1"/>
</dbReference>
<dbReference type="InterPro" id="IPR050323">
    <property type="entry name" value="Ribosomal_protein_uL10"/>
</dbReference>
<dbReference type="InterPro" id="IPR001790">
    <property type="entry name" value="Ribosomal_uL10"/>
</dbReference>
<dbReference type="InterPro" id="IPR040637">
    <property type="entry name" value="Ribosomal_uL10-like_insert"/>
</dbReference>
<dbReference type="InterPro" id="IPR043164">
    <property type="entry name" value="Ribosomal_uL10-like_insert_sf"/>
</dbReference>
<dbReference type="InterPro" id="IPR043141">
    <property type="entry name" value="Ribosomal_uL10-like_sf"/>
</dbReference>
<dbReference type="InterPro" id="IPR030670">
    <property type="entry name" value="uL10_eukaryotes"/>
</dbReference>
<dbReference type="PANTHER" id="PTHR45699">
    <property type="entry name" value="60S ACIDIC RIBOSOMAL PROTEIN P0"/>
    <property type="match status" value="1"/>
</dbReference>
<dbReference type="PANTHER" id="PTHR45699:SF3">
    <property type="entry name" value="LARGE RIBOSOMAL SUBUNIT PROTEIN UL10"/>
    <property type="match status" value="1"/>
</dbReference>
<dbReference type="Pfam" id="PF00428">
    <property type="entry name" value="Ribosomal_60s"/>
    <property type="match status" value="1"/>
</dbReference>
<dbReference type="Pfam" id="PF00466">
    <property type="entry name" value="Ribosomal_L10"/>
    <property type="match status" value="1"/>
</dbReference>
<dbReference type="Pfam" id="PF17777">
    <property type="entry name" value="RL10P_insert"/>
    <property type="match status" value="1"/>
</dbReference>
<dbReference type="PIRSF" id="PIRSF039087">
    <property type="entry name" value="L10E"/>
    <property type="match status" value="1"/>
</dbReference>
<dbReference type="SUPFAM" id="SSF160369">
    <property type="entry name" value="Ribosomal protein L10-like"/>
    <property type="match status" value="1"/>
</dbReference>
<organism>
    <name type="scientific">Sus scrofa</name>
    <name type="common">Pig</name>
    <dbReference type="NCBI Taxonomy" id="9823"/>
    <lineage>
        <taxon>Eukaryota</taxon>
        <taxon>Metazoa</taxon>
        <taxon>Chordata</taxon>
        <taxon>Craniata</taxon>
        <taxon>Vertebrata</taxon>
        <taxon>Euteleostomi</taxon>
        <taxon>Mammalia</taxon>
        <taxon>Eutheria</taxon>
        <taxon>Laurasiatheria</taxon>
        <taxon>Artiodactyla</taxon>
        <taxon>Suina</taxon>
        <taxon>Suidae</taxon>
        <taxon>Sus</taxon>
    </lineage>
</organism>
<name>RLA0_PIG</name>
<evidence type="ECO:0000250" key="1">
    <source>
        <dbReference type="UniProtKB" id="P05388"/>
    </source>
</evidence>
<evidence type="ECO:0000250" key="2">
    <source>
        <dbReference type="UniProtKB" id="P14869"/>
    </source>
</evidence>
<evidence type="ECO:0000256" key="3">
    <source>
        <dbReference type="SAM" id="MobiDB-lite"/>
    </source>
</evidence>
<evidence type="ECO:0000305" key="4"/>
<reference key="1">
    <citation type="journal article" date="2007" name="J. Genet. Genomics">
        <title>Characterization of the full-length cDNA, chromosomal localization, and polymorphism of the porcine RPLP0 gene.</title>
        <authorList>
            <person name="Wu X."/>
            <person name="Yang S.L."/>
            <person name="Zhu Z.M."/>
            <person name="Feng S.T."/>
            <person name="Li K."/>
        </authorList>
    </citation>
    <scope>NUCLEOTIDE SEQUENCE [MRNA]</scope>
    <source>
        <tissue>Skeletal muscle</tissue>
    </source>
</reference>
<reference key="2">
    <citation type="journal article" date="1996" name="Mamm. Genome">
        <title>Evaluation and characterization of a porcine small intestine cDNA library: analysis of 839 clones.</title>
        <authorList>
            <person name="Winteroe A.K."/>
            <person name="Fredholm M."/>
            <person name="Davies W."/>
        </authorList>
    </citation>
    <scope>NUCLEOTIDE SEQUENCE [LARGE SCALE MRNA] OF 1-93</scope>
    <source>
        <tissue>Small intestine</tissue>
    </source>
</reference>
<feature type="chain" id="PRO_0000154760" description="Large ribosomal subunit protein uL10">
    <location>
        <begin position="1"/>
        <end position="318"/>
    </location>
</feature>
<feature type="region of interest" description="Disordered" evidence="3">
    <location>
        <begin position="298"/>
        <end position="318"/>
    </location>
</feature>
<feature type="compositionally biased region" description="Acidic residues" evidence="3">
    <location>
        <begin position="303"/>
        <end position="312"/>
    </location>
</feature>
<feature type="modified residue" description="Phosphotyrosine" evidence="2">
    <location>
        <position position="24"/>
    </location>
</feature>
<feature type="modified residue" description="Phosphothreonine" evidence="1">
    <location>
        <position position="59"/>
    </location>
</feature>
<feature type="modified residue" description="Phosphoserine" evidence="1">
    <location>
        <position position="305"/>
    </location>
</feature>
<feature type="modified residue" description="Phosphoserine" evidence="1">
    <location>
        <position position="308"/>
    </location>
</feature>
<feature type="cross-link" description="Glycyl lysine isopeptide (Lys-Gly) (interchain with G-Cter in ubiquitin)" evidence="1">
    <location>
        <position position="264"/>
    </location>
</feature>
<feature type="cross-link" description="Glycyl lysine isopeptide (Lys-Gly) (interchain with G-Cter in SUMO1); alternate" evidence="1">
    <location>
        <position position="298"/>
    </location>
</feature>
<feature type="cross-link" description="Glycyl lysine isopeptide (Lys-Gly) (interchain with G-Cter in SUMO2); alternate" evidence="1">
    <location>
        <position position="298"/>
    </location>
</feature>
<feature type="sequence conflict" description="In Ref. 2; CAA23264." evidence="4" ref="2">
    <original>T</original>
    <variation>P</variation>
    <location>
        <position position="8"/>
    </location>
</feature>
<feature type="sequence conflict" description="In Ref. 2; CAA23264." evidence="4" ref="2">
    <original>E</original>
    <variation>G</variation>
    <location>
        <position position="76"/>
    </location>
</feature>
<feature type="sequence conflict" description="In Ref. 2; CAA23264." evidence="4" ref="2">
    <original>H</original>
    <variation>Q</variation>
    <location>
        <position position="81"/>
    </location>
</feature>
<comment type="function">
    <text>Ribosomal protein P0 is the functional equivalent of E.coli protein L10.</text>
</comment>
<comment type="subunit">
    <text evidence="1">P0 forms a pentameric complex by interaction with dimers of P1 and P2. Identified in a IGF2BP1-dependent mRNP granule complex containing untranslated mRNAs. Interacts with APEX1. Interacts with FMR1.</text>
</comment>
<comment type="subcellular location">
    <subcellularLocation>
        <location evidence="1">Nucleus</location>
    </subcellularLocation>
    <subcellularLocation>
        <location evidence="1">Cytoplasm</location>
    </subcellularLocation>
    <text evidence="1">Localized in cytoplasmic mRNP granules containing untranslated mRNAs.</text>
</comment>
<comment type="PTM">
    <text evidence="1">Ubiquitinated at Lys-264 by RNF14 and RNF25 in response to ribosome collisions (ribosome stalling).</text>
</comment>
<comment type="similarity">
    <text evidence="4">Belongs to the universal ribosomal protein uL10 family.</text>
</comment>
<proteinExistence type="evidence at protein level"/>
<gene>
    <name type="primary">RPLP0</name>
</gene>
<sequence>MPREDRATWKSNYFLKIIQLLDDYPKCFIVGADNVGSKQMQQIRMSLRGKAVVLMGKNTMMRKAIRGHLENNPALEKLLPHIRGNVGFVFTKEDLTEIRDMLLANKVPAAARAGAIAPCEVTVPAQNTGLGPEKTSFFQALGITTKISRGTIEILSDVQLIKTGDKVGASEATLLNMLNISPFSFGLIIQQVFDNGSIYNPEVLDITEETLHSRFLEGVRNVASVCLQIGYPTVASVPHSIINGYKRVLALSVETDYTFPLAEKVKAFLADPSAFVAAAPVAAATTAAPAAAAAAPAKVEAKEESEESDEDMGFGLFD</sequence>